<sequence>MDQKTTGLRENYGHRRQPALGKAMPVTALLLNLESNPLDYSRNDIGAELLEDDDKPPQLFSVTDEPPSPNEEDYKPPNHHEDDGKLAGERHREIPCSNCLKTAPGHLIDRQSAINEMCQRLCGPECRRPQGLTLDGVRQDFLRQYEIAEAVAKTSAMTSTVQMKQRLAARKLEFEKEMEMDEQLGVASPRNDINLGQSSTVAATGMGEFEFEPPRDLLLYLVRMGSFNSAPKINNVDSQDDGLVLPSGLSTPALLQHVQQLRGGGIEQPSLLTRGFLKPLLADEDVADGLRCLKLNSVSRVCSAPVEGDDIRLLQWNILSQTLGQHNDGFVRCPEEALTWEHRKYLIVQEILQNQPDVICLQEVDHFKFLQTVLGSQNYAGIFFPKPDSPCLYIEQNNGPDGCAIFYKRDKLQLQGYDTRILEVWRVQSNQVAIAARLRMRSSGREFCVATTHLKARHGALLAKLRNEQGRDLIRFVKQFAGDTPLLLCGDFNAEPVEPIYATILGCDLLRLGSAYADVKLDREEILHPNADVGEFVAKSMKREPPYTTWKIREEGEECHTIDYVFYTPDRLKIKNCLDFPAGEQIGKNRTPSFQYPSDHFSLVCDFELLPPTENGKESGSGSGSDGENETEVEGSKHGSIQ</sequence>
<keyword id="KW-0025">Alternative splicing</keyword>
<keyword id="KW-0090">Biological rhythms</keyword>
<keyword id="KW-0963">Cytoplasm</keyword>
<keyword id="KW-0378">Hydrolase</keyword>
<keyword id="KW-0460">Magnesium</keyword>
<keyword id="KW-0479">Metal-binding</keyword>
<keyword id="KW-1185">Reference proteome</keyword>
<proteinExistence type="evidence at protein level"/>
<feature type="chain" id="PRO_0000448000" description="Nocturnin" evidence="10">
    <location>
        <begin position="1"/>
        <end position="642"/>
    </location>
</feature>
<feature type="region of interest" description="Disordered" evidence="2">
    <location>
        <begin position="50"/>
        <end position="87"/>
    </location>
</feature>
<feature type="region of interest" description="Disordered" evidence="2">
    <location>
        <begin position="611"/>
        <end position="642"/>
    </location>
</feature>
<feature type="compositionally biased region" description="Basic and acidic residues" evidence="2">
    <location>
        <begin position="72"/>
        <end position="87"/>
    </location>
</feature>
<feature type="binding site" evidence="1">
    <location>
        <position position="363"/>
    </location>
    <ligand>
        <name>Mg(2+)</name>
        <dbReference type="ChEBI" id="CHEBI:18420"/>
    </ligand>
</feature>
<feature type="binding site" evidence="1">
    <location>
        <position position="363"/>
    </location>
    <ligand>
        <name>substrate</name>
    </ligand>
</feature>
<feature type="binding site" evidence="1">
    <location>
        <position position="430"/>
    </location>
    <ligand>
        <name>substrate</name>
    </ligand>
</feature>
<feature type="binding site" evidence="1">
    <location>
        <begin position="453"/>
        <end position="456"/>
    </location>
    <ligand>
        <name>substrate</name>
    </ligand>
</feature>
<feature type="binding site" evidence="1">
    <location>
        <begin position="491"/>
        <end position="493"/>
    </location>
    <ligand>
        <name>substrate</name>
    </ligand>
</feature>
<feature type="binding site" evidence="1">
    <location>
        <position position="600"/>
    </location>
    <ligand>
        <name>substrate</name>
    </ligand>
</feature>
<feature type="splice variant" id="VSP_060324" description="In isoform F." evidence="10">
    <original>MDQKTTGLRENYGHRRQPALGKAMPVTALLLNLESNPLDYSRNDIGAELLEDDDKPPQLFSVTDEPPSPNEEDYKPPNHHEDDGKLAGERHREIPCSNCLKTAPGHLIDRQSAINEMCQRLCGPECRRPQGLTLDGVRQDFLRQYEIAEAVAKTSAMTSTVQMKQRLAARKLEFEKEMEMDEQLGVASPRNDINLGQSSTVAATGMGEFEFEPPRDLLLYLVR</original>
    <variation>MKLISTVVYLLVAFYKFAKKLL</variation>
    <location>
        <begin position="1"/>
        <end position="223"/>
    </location>
</feature>
<feature type="splice variant" id="VSP_060325" description="In isoform G." evidence="10">
    <original>MDQKTTGLRENYGHRRQPALGKAMPVTALLLNLESNPLDYSRNDIGAELLEDDDKPPQLFSVTDEPPSPNEEDYKPPNHHEDDGKLAGERHREIPCSNCLKTAPGHLIDRQSAINEMCQRLCGPECRRPQGLTLDGVRQDFLRQYEIAEAVAKTSAMTSTVQMKQRLAARKLEFEKEMEMDEQLGVASPRNDINLGQSSTVAATGMGEFEFEPPRDLLLYLVR</original>
    <variation>MEFLMKTSRLIVTSKTFARRVAVPIPSKVKMGQFYTSQRHSHSLFIFSIILRKILYRKPNAL</variation>
    <location>
        <begin position="1"/>
        <end position="223"/>
    </location>
</feature>
<feature type="splice variant" id="VSP_060326" description="In isoform H." evidence="10">
    <location>
        <begin position="1"/>
        <end position="223"/>
    </location>
</feature>
<feature type="splice variant" id="VSP_060327" description="In isoform C." evidence="10">
    <original>MDQKTTGLRENYGHRRQPALGKAMPVTALLLNLESNPLDYSRNDIGAELLEDDDKPPQLFSVTDEPPSPNEEDYKPPNHHEDDGKLAGERHREIPCSNCLKTAPGHLIDRQSAINEMCQRLCGPECRRPQGLTLDGVRQDFLRQYEIAEAVAKTSAMTSTVQMKQRLAARKLEFEKEMEMDEQLGVASPRNDINLGQSSTVAATGMGEFEFEPPRDLLLYLV</original>
    <variation>MEPAVPIKRANKAPCKNDRKAYLQKVMLT</variation>
    <location>
        <begin position="1"/>
        <end position="222"/>
    </location>
</feature>
<feature type="splice variant" id="VSP_060328" description="In isoform E." evidence="10">
    <original>MDQKTTGLRENYGHRRQPALGKAMPVTALLLNLESNPLDYSRNDIGAELLEDDDKPPQLFSVTDEPPSPNEEDYKPPNHHEDDGKLAGERHREIPCSNCLKTAPGHLIDRQSAINEMCQRLCGPECRRPQGLTLDGVRQDFLRQYEIAEAVAKTSAMTSTVQMKQRLAARKLEFEKEMEMDEQLGVASPRNDINLGQSSTVAATGMGEFEFEPPRDLLLYLV</original>
    <variation>MEFLMKTSRLIVTSKTFARRVAVPIP</variation>
    <location>
        <begin position="1"/>
        <end position="222"/>
    </location>
</feature>
<feature type="mutagenesis site" description="Disrupts catalytic activity." evidence="6">
    <original>E</original>
    <variation>A</variation>
    <location>
        <position position="363"/>
    </location>
</feature>
<feature type="mutagenesis site" description="Decreases mRNA deadelynation and decay; when associated with A-493." evidence="5">
    <original>D</original>
    <variation>A</variation>
    <location>
        <position position="491"/>
    </location>
</feature>
<feature type="mutagenesis site" description="Decreases mRNA deadelynation and decay; when associated with A-491." evidence="5">
    <original>N</original>
    <variation>A</variation>
    <location>
        <position position="493"/>
    </location>
</feature>
<feature type="sequence conflict" description="In Ref. 5; AAT94521." evidence="10" ref="5">
    <original>D</original>
    <variation>Y</variation>
    <location>
        <position position="579"/>
    </location>
</feature>
<accession>A8JQX3</accession>
<accession>A0A0B4KH43</accession>
<accession>A0A0C4DHA6</accession>
<accession>C0PPK5</accession>
<accession>Q3ZAP4</accession>
<accession>Q6AWF6</accession>
<accession>Q8MTZ6</accession>
<comment type="function">
    <text evidence="3 5 6">Phosphatase which catalyzes the conversion of NADP(+) to NAD(+) and of NADPH to NADH (PubMed:31147539). Shows a small preference for NADPH over NADP(+) (PubMed:31147539). Because of its association with the CCR4-NOT complex, has a role in mRNA deadenylation and decay (PubMed:20504953). Required at the pupal stage for proper wing morphogenesis after eclosion (PubMed:19581445).</text>
</comment>
<comment type="function">
    <molecule>Isoform C</molecule>
    <text evidence="4">Doesn't have a role in light-mediated behavioral response.</text>
</comment>
<comment type="function">
    <molecule>Isoform D</molecule>
    <text evidence="4">In dorsal neurons, contributes to the light-mediated behavioral response.</text>
</comment>
<comment type="function">
    <molecule>Isoform E</molecule>
    <text evidence="4">Doesn't have a role in light-mediated behavioral response.</text>
</comment>
<comment type="catalytic activity">
    <reaction evidence="6">
        <text>NADP(+) + H2O = phosphate + NAD(+)</text>
        <dbReference type="Rhea" id="RHEA:28050"/>
        <dbReference type="ChEBI" id="CHEBI:15377"/>
        <dbReference type="ChEBI" id="CHEBI:43474"/>
        <dbReference type="ChEBI" id="CHEBI:57540"/>
        <dbReference type="ChEBI" id="CHEBI:58349"/>
    </reaction>
    <physiologicalReaction direction="left-to-right" evidence="6">
        <dbReference type="Rhea" id="RHEA:28051"/>
    </physiologicalReaction>
</comment>
<comment type="catalytic activity">
    <reaction evidence="6">
        <text>NADPH + H2O = phosphate + NADH</text>
        <dbReference type="Rhea" id="RHEA:60664"/>
        <dbReference type="ChEBI" id="CHEBI:15377"/>
        <dbReference type="ChEBI" id="CHEBI:43474"/>
        <dbReference type="ChEBI" id="CHEBI:57783"/>
        <dbReference type="ChEBI" id="CHEBI:57945"/>
    </reaction>
    <physiologicalReaction direction="left-to-right" evidence="6">
        <dbReference type="Rhea" id="RHEA:60665"/>
    </physiologicalReaction>
</comment>
<comment type="cofactor">
    <cofactor evidence="1">
        <name>Mg(2+)</name>
        <dbReference type="ChEBI" id="CHEBI:18420"/>
    </cofactor>
    <text evidence="1">Binds 2 magnesium ions, but the ions are only loosely bound to the protein.</text>
</comment>
<comment type="subunit">
    <text evidence="5">Associates to the CCR4-NOT complex composed of at least Pop2/Caf1-55, Ccr4, Not1, Rga/Not2, and Not3.</text>
</comment>
<comment type="subcellular location">
    <subcellularLocation>
        <location evidence="3">Cytoplasm</location>
    </subcellularLocation>
</comment>
<comment type="alternative products">
    <event type="alternative splicing"/>
    <isoform>
        <id>A8JQX3-1</id>
        <name evidence="8 9 15">D</name>
        <sequence type="displayed"/>
    </isoform>
    <isoform>
        <id>A8JQX3-2</id>
        <name evidence="15">F</name>
        <sequence type="described" ref="VSP_060324"/>
    </isoform>
    <isoform>
        <id>A8JQX3-3</id>
        <name evidence="15">E</name>
        <sequence type="described" ref="VSP_060328"/>
    </isoform>
    <isoform>
        <id>A8JQX3-4</id>
        <name evidence="8 9 15">C</name>
        <sequence type="described" ref="VSP_060327"/>
    </isoform>
    <isoform>
        <id>A8JQX3-5</id>
        <name evidence="15">H</name>
        <sequence type="described" ref="VSP_060326"/>
    </isoform>
    <isoform>
        <id>A8JQX3-6</id>
        <name evidence="15">G</name>
        <sequence type="described" ref="VSP_060325"/>
    </isoform>
</comment>
<comment type="tissue specificity">
    <text evidence="3 4">Expressed in the head, in the dorsal neurons DN3, a subgroup of clock neurons (at protein level) (PubMed:19966839). Ubiquitously expressed in both males and females (PubMed:19581445).</text>
</comment>
<comment type="developmental stage">
    <text evidence="3">Expressed at every stage (PubMed:19581445). Expressed in the embryonic salivary glands, the distal part of the proventriculus and the ring gland as well as weak expression in the midgut (PubMed:19581445). At third instar larval stage, expressed at the proventricular and ring gland (PubMed:19581445). No transcript detected in the larval central brain, in the imaginal disks, the salivary glands, or in the fat body (PubMed:19581445).</text>
</comment>
<comment type="induction">
    <text evidence="3 4 7">Nutritional conditions, such as food deprivation, and higher temperature during the larval stage increase protein expression in the adult flies (PubMed:19581445, Ref.7). Levels of expression at the pupal stage are phenocritical for the cu-dependent wing phenotype (PubMed:19581445). In the dorsal neurons DN3, a subgroup of clock neurons, accumulates rhythmically with a peak around ZT12 (PubMed:19966839).</text>
</comment>
<comment type="disruption phenotype">
    <text evidence="3">Viable and fertile with upward bent (curled) wings and proximally crossed posterior scutellar bristles (PubMed:19581445). RNAi-mediated knockdown has a similar phenotype (PubMed:19581445). RNAi-mediated knockdown in the wing, nervous system, ring gland, muscles, fat body, tracheal system, salivary gland, or gut has no impact on wing morphogenesis (PubMed:19581445).</text>
</comment>
<comment type="similarity">
    <text evidence="10">Belongs to the CCR4/nocturin family.</text>
</comment>
<comment type="caution">
    <text evidence="6">The purified protein lacks deadenylase activity.</text>
</comment>
<organism evidence="16">
    <name type="scientific">Drosophila melanogaster</name>
    <name type="common">Fruit fly</name>
    <dbReference type="NCBI Taxonomy" id="7227"/>
    <lineage>
        <taxon>Eukaryota</taxon>
        <taxon>Metazoa</taxon>
        <taxon>Ecdysozoa</taxon>
        <taxon>Arthropoda</taxon>
        <taxon>Hexapoda</taxon>
        <taxon>Insecta</taxon>
        <taxon>Pterygota</taxon>
        <taxon>Neoptera</taxon>
        <taxon>Endopterygota</taxon>
        <taxon>Diptera</taxon>
        <taxon>Brachycera</taxon>
        <taxon>Muscomorpha</taxon>
        <taxon>Ephydroidea</taxon>
        <taxon>Drosophilidae</taxon>
        <taxon>Drosophila</taxon>
        <taxon>Sophophora</taxon>
    </lineage>
</organism>
<protein>
    <recommendedName>
        <fullName evidence="8 15">Nocturnin</fullName>
        <ecNumber evidence="6">3.1.3.-</ecNumber>
    </recommendedName>
    <alternativeName>
        <fullName evidence="8 15">Curled</fullName>
    </alternativeName>
</protein>
<dbReference type="EC" id="3.1.3.-" evidence="6"/>
<dbReference type="EMBL" id="AY043266">
    <property type="protein sequence ID" value="AAK85704.1"/>
    <property type="molecule type" value="mRNA"/>
</dbReference>
<dbReference type="EMBL" id="AE014297">
    <property type="protein sequence ID" value="AAF54600.3"/>
    <property type="molecule type" value="Genomic_DNA"/>
</dbReference>
<dbReference type="EMBL" id="AE014297">
    <property type="protein sequence ID" value="AAF54601.3"/>
    <property type="molecule type" value="Genomic_DNA"/>
</dbReference>
<dbReference type="EMBL" id="AE014297">
    <property type="protein sequence ID" value="ABW08639.1"/>
    <property type="molecule type" value="Genomic_DNA"/>
</dbReference>
<dbReference type="EMBL" id="AE014297">
    <property type="protein sequence ID" value="ABW08640.1"/>
    <property type="molecule type" value="Genomic_DNA"/>
</dbReference>
<dbReference type="EMBL" id="AE014297">
    <property type="protein sequence ID" value="ABW08641.1"/>
    <property type="molecule type" value="Genomic_DNA"/>
</dbReference>
<dbReference type="EMBL" id="AE014297">
    <property type="protein sequence ID" value="AGB95853.1"/>
    <property type="molecule type" value="Genomic_DNA"/>
</dbReference>
<dbReference type="EMBL" id="BT023825">
    <property type="protein sequence ID" value="AAZ86746.1"/>
    <property type="molecule type" value="mRNA"/>
</dbReference>
<dbReference type="EMBL" id="BT015292">
    <property type="protein sequence ID" value="AAT94521.1"/>
    <property type="molecule type" value="mRNA"/>
</dbReference>
<dbReference type="EMBL" id="BT025859">
    <property type="protein sequence ID" value="ABF85759.1"/>
    <property type="molecule type" value="mRNA"/>
</dbReference>
<dbReference type="EMBL" id="BT070224">
    <property type="protein sequence ID" value="ACN38810.1"/>
    <property type="molecule type" value="mRNA"/>
</dbReference>
<dbReference type="RefSeq" id="NP_001097745.1">
    <molecule id="A8JQX3-4"/>
    <property type="nucleotide sequence ID" value="NM_001104275.3"/>
</dbReference>
<dbReference type="RefSeq" id="NP_001097746.1">
    <molecule id="A8JQX3-1"/>
    <property type="nucleotide sequence ID" value="NM_001104276.2"/>
</dbReference>
<dbReference type="RefSeq" id="NP_001097747.1">
    <molecule id="A8JQX3-3"/>
    <property type="nucleotide sequence ID" value="NM_001104277.2"/>
</dbReference>
<dbReference type="RefSeq" id="NP_001262471.1">
    <molecule id="A8JQX3-5"/>
    <property type="nucleotide sequence ID" value="NM_001275542.1"/>
</dbReference>
<dbReference type="RefSeq" id="NP_731539.2">
    <molecule id="A8JQX3-6"/>
    <property type="nucleotide sequence ID" value="NM_169374.2"/>
</dbReference>
<dbReference type="RefSeq" id="NP_731540.2">
    <molecule id="A8JQX3-2"/>
    <property type="nucleotide sequence ID" value="NM_169375.2"/>
</dbReference>
<dbReference type="SMR" id="A8JQX3"/>
<dbReference type="FunCoup" id="A8JQX3">
    <property type="interactions" value="121"/>
</dbReference>
<dbReference type="IntAct" id="A8JQX3">
    <property type="interactions" value="1"/>
</dbReference>
<dbReference type="STRING" id="7227.FBpp0112131"/>
<dbReference type="PaxDb" id="7227-FBpp0112131"/>
<dbReference type="DNASU" id="41339"/>
<dbReference type="EnsemblMetazoa" id="FBtr0113218">
    <molecule id="A8JQX3-4"/>
    <property type="protein sequence ID" value="FBpp0112130"/>
    <property type="gene ID" value="FBgn0261808"/>
</dbReference>
<dbReference type="EnsemblMetazoa" id="FBtr0113219">
    <molecule id="A8JQX3-1"/>
    <property type="protein sequence ID" value="FBpp0112131"/>
    <property type="gene ID" value="FBgn0261808"/>
</dbReference>
<dbReference type="EnsemblMetazoa" id="FBtr0113220">
    <molecule id="A8JQX3-3"/>
    <property type="protein sequence ID" value="FBpp0112132"/>
    <property type="gene ID" value="FBgn0261808"/>
</dbReference>
<dbReference type="EnsemblMetazoa" id="FBtr0335218">
    <molecule id="A8JQX3-2"/>
    <property type="protein sequence ID" value="FBpp0307205"/>
    <property type="gene ID" value="FBgn0261808"/>
</dbReference>
<dbReference type="EnsemblMetazoa" id="FBtr0335219">
    <molecule id="A8JQX3-6"/>
    <property type="protein sequence ID" value="FBpp0307206"/>
    <property type="gene ID" value="FBgn0261808"/>
</dbReference>
<dbReference type="EnsemblMetazoa" id="FBtr0335220">
    <molecule id="A8JQX3-5"/>
    <property type="protein sequence ID" value="FBpp0307207"/>
    <property type="gene ID" value="FBgn0261808"/>
</dbReference>
<dbReference type="GeneID" id="41339"/>
<dbReference type="KEGG" id="dme:Dmel_CG31299"/>
<dbReference type="UCSC" id="CG31299-RC">
    <property type="organism name" value="d. melanogaster"/>
</dbReference>
<dbReference type="UCSC" id="CG31299-RD">
    <molecule id="A8JQX3-1"/>
    <property type="organism name" value="d. melanogaster"/>
</dbReference>
<dbReference type="UCSC" id="CG31299-RE">
    <property type="organism name" value="d. melanogaster"/>
</dbReference>
<dbReference type="AGR" id="FB:FBgn0261808"/>
<dbReference type="CTD" id="41339"/>
<dbReference type="FlyBase" id="FBgn0261808">
    <property type="gene designation" value="cu"/>
</dbReference>
<dbReference type="VEuPathDB" id="VectorBase:FBgn0261808"/>
<dbReference type="eggNOG" id="KOG0620">
    <property type="taxonomic scope" value="Eukaryota"/>
</dbReference>
<dbReference type="GeneTree" id="ENSGT00940000155249"/>
<dbReference type="HOGENOM" id="CLU_411195_0_0_1"/>
<dbReference type="InParanoid" id="A8JQX3"/>
<dbReference type="OMA" id="CALFFDR"/>
<dbReference type="OrthoDB" id="276515at2759"/>
<dbReference type="PhylomeDB" id="A8JQX3"/>
<dbReference type="BRENDA" id="3.1.3.108">
    <property type="organism ID" value="1994"/>
</dbReference>
<dbReference type="BioGRID-ORCS" id="41339">
    <property type="hits" value="0 hits in 1 CRISPR screen"/>
</dbReference>
<dbReference type="GenomeRNAi" id="41339"/>
<dbReference type="PRO" id="PR:A8JQX3"/>
<dbReference type="Proteomes" id="UP000000803">
    <property type="component" value="Chromosome 3R"/>
</dbReference>
<dbReference type="Bgee" id="FBgn0261808">
    <property type="expression patterns" value="Expressed in indirect flight muscle cell (Drosophila) in post-embryonic organism and 147 other cell types or tissues"/>
</dbReference>
<dbReference type="ExpressionAtlas" id="A8JQX3">
    <property type="expression patterns" value="baseline and differential"/>
</dbReference>
<dbReference type="GO" id="GO:0005737">
    <property type="term" value="C:cytoplasm"/>
    <property type="evidence" value="ECO:0000314"/>
    <property type="project" value="FlyBase"/>
</dbReference>
<dbReference type="GO" id="GO:0005739">
    <property type="term" value="C:mitochondrion"/>
    <property type="evidence" value="ECO:0000250"/>
    <property type="project" value="FlyBase"/>
</dbReference>
<dbReference type="GO" id="GO:0000175">
    <property type="term" value="F:3'-5'-RNA exonuclease activity"/>
    <property type="evidence" value="ECO:0000318"/>
    <property type="project" value="GO_Central"/>
</dbReference>
<dbReference type="GO" id="GO:0046872">
    <property type="term" value="F:metal ion binding"/>
    <property type="evidence" value="ECO:0007669"/>
    <property type="project" value="UniProtKB-KW"/>
</dbReference>
<dbReference type="GO" id="GO:0019178">
    <property type="term" value="F:NADP phosphatase activity"/>
    <property type="evidence" value="ECO:0000314"/>
    <property type="project" value="UniProtKB"/>
</dbReference>
<dbReference type="GO" id="GO:0102757">
    <property type="term" value="F:NADPH phosphatase activity"/>
    <property type="evidence" value="ECO:0000314"/>
    <property type="project" value="UniProtKB"/>
</dbReference>
<dbReference type="GO" id="GO:0045475">
    <property type="term" value="P:locomotor rhythm"/>
    <property type="evidence" value="ECO:0000315"/>
    <property type="project" value="FlyBase"/>
</dbReference>
<dbReference type="GO" id="GO:0006739">
    <property type="term" value="P:NADP metabolic process"/>
    <property type="evidence" value="ECO:0000314"/>
    <property type="project" value="UniProtKB"/>
</dbReference>
<dbReference type="GO" id="GO:0009416">
    <property type="term" value="P:response to light stimulus"/>
    <property type="evidence" value="ECO:0000315"/>
    <property type="project" value="FlyBase"/>
</dbReference>
<dbReference type="FunFam" id="3.60.10.10:FF:000012">
    <property type="entry name" value="nocturnin isoform X2"/>
    <property type="match status" value="1"/>
</dbReference>
<dbReference type="Gene3D" id="3.60.10.10">
    <property type="entry name" value="Endonuclease/exonuclease/phosphatase"/>
    <property type="match status" value="1"/>
</dbReference>
<dbReference type="InterPro" id="IPR050410">
    <property type="entry name" value="CCR4/nocturin_mRNA_transcr"/>
</dbReference>
<dbReference type="InterPro" id="IPR036691">
    <property type="entry name" value="Endo/exonu/phosph_ase_sf"/>
</dbReference>
<dbReference type="InterPro" id="IPR005135">
    <property type="entry name" value="Endo/exonuclease/phosphatase"/>
</dbReference>
<dbReference type="PANTHER" id="PTHR12121">
    <property type="entry name" value="CARBON CATABOLITE REPRESSOR PROTEIN 4"/>
    <property type="match status" value="1"/>
</dbReference>
<dbReference type="PANTHER" id="PTHR12121:SF45">
    <property type="entry name" value="NOCTURNIN"/>
    <property type="match status" value="1"/>
</dbReference>
<dbReference type="Pfam" id="PF03372">
    <property type="entry name" value="Exo_endo_phos"/>
    <property type="match status" value="1"/>
</dbReference>
<dbReference type="SUPFAM" id="SSF56219">
    <property type="entry name" value="DNase I-like"/>
    <property type="match status" value="1"/>
</dbReference>
<gene>
    <name evidence="8 15" type="primary">cu</name>
    <name evidence="15" type="ORF">CG31299</name>
</gene>
<reference evidence="11" key="1">
    <citation type="journal article" date="2001" name="BMC Genomics">
        <title>Identification of four families of yCCR4- and Mg2+-dependent endonuclease-related proteins in higher eukaryotes, and characterization of orthologs of yCCR4 with a conserved leucine-rich repeat essential for hCAF1/hPOP2 binding.</title>
        <authorList>
            <person name="Dupressoir A."/>
            <person name="Morel A.-P."/>
            <person name="Barbot W."/>
            <person name="Loireau M.-P."/>
            <person name="Corbo L."/>
            <person name="Heidmann T."/>
        </authorList>
    </citation>
    <scope>NUCLEOTIDE SEQUENCE [MRNA] (ISOFORM C)</scope>
</reference>
<reference evidence="16" key="2">
    <citation type="journal article" date="2000" name="Science">
        <title>The genome sequence of Drosophila melanogaster.</title>
        <authorList>
            <person name="Adams M.D."/>
            <person name="Celniker S.E."/>
            <person name="Holt R.A."/>
            <person name="Evans C.A."/>
            <person name="Gocayne J.D."/>
            <person name="Amanatides P.G."/>
            <person name="Scherer S.E."/>
            <person name="Li P.W."/>
            <person name="Hoskins R.A."/>
            <person name="Galle R.F."/>
            <person name="George R.A."/>
            <person name="Lewis S.E."/>
            <person name="Richards S."/>
            <person name="Ashburner M."/>
            <person name="Henderson S.N."/>
            <person name="Sutton G.G."/>
            <person name="Wortman J.R."/>
            <person name="Yandell M.D."/>
            <person name="Zhang Q."/>
            <person name="Chen L.X."/>
            <person name="Brandon R.C."/>
            <person name="Rogers Y.-H.C."/>
            <person name="Blazej R.G."/>
            <person name="Champe M."/>
            <person name="Pfeiffer B.D."/>
            <person name="Wan K.H."/>
            <person name="Doyle C."/>
            <person name="Baxter E.G."/>
            <person name="Helt G."/>
            <person name="Nelson C.R."/>
            <person name="Miklos G.L.G."/>
            <person name="Abril J.F."/>
            <person name="Agbayani A."/>
            <person name="An H.-J."/>
            <person name="Andrews-Pfannkoch C."/>
            <person name="Baldwin D."/>
            <person name="Ballew R.M."/>
            <person name="Basu A."/>
            <person name="Baxendale J."/>
            <person name="Bayraktaroglu L."/>
            <person name="Beasley E.M."/>
            <person name="Beeson K.Y."/>
            <person name="Benos P.V."/>
            <person name="Berman B.P."/>
            <person name="Bhandari D."/>
            <person name="Bolshakov S."/>
            <person name="Borkova D."/>
            <person name="Botchan M.R."/>
            <person name="Bouck J."/>
            <person name="Brokstein P."/>
            <person name="Brottier P."/>
            <person name="Burtis K.C."/>
            <person name="Busam D.A."/>
            <person name="Butler H."/>
            <person name="Cadieu E."/>
            <person name="Center A."/>
            <person name="Chandra I."/>
            <person name="Cherry J.M."/>
            <person name="Cawley S."/>
            <person name="Dahlke C."/>
            <person name="Davenport L.B."/>
            <person name="Davies P."/>
            <person name="de Pablos B."/>
            <person name="Delcher A."/>
            <person name="Deng Z."/>
            <person name="Mays A.D."/>
            <person name="Dew I."/>
            <person name="Dietz S.M."/>
            <person name="Dodson K."/>
            <person name="Doup L.E."/>
            <person name="Downes M."/>
            <person name="Dugan-Rocha S."/>
            <person name="Dunkov B.C."/>
            <person name="Dunn P."/>
            <person name="Durbin K.J."/>
            <person name="Evangelista C.C."/>
            <person name="Ferraz C."/>
            <person name="Ferriera S."/>
            <person name="Fleischmann W."/>
            <person name="Fosler C."/>
            <person name="Gabrielian A.E."/>
            <person name="Garg N.S."/>
            <person name="Gelbart W.M."/>
            <person name="Glasser K."/>
            <person name="Glodek A."/>
            <person name="Gong F."/>
            <person name="Gorrell J.H."/>
            <person name="Gu Z."/>
            <person name="Guan P."/>
            <person name="Harris M."/>
            <person name="Harris N.L."/>
            <person name="Harvey D.A."/>
            <person name="Heiman T.J."/>
            <person name="Hernandez J.R."/>
            <person name="Houck J."/>
            <person name="Hostin D."/>
            <person name="Houston K.A."/>
            <person name="Howland T.J."/>
            <person name="Wei M.-H."/>
            <person name="Ibegwam C."/>
            <person name="Jalali M."/>
            <person name="Kalush F."/>
            <person name="Karpen G.H."/>
            <person name="Ke Z."/>
            <person name="Kennison J.A."/>
            <person name="Ketchum K.A."/>
            <person name="Kimmel B.E."/>
            <person name="Kodira C.D."/>
            <person name="Kraft C.L."/>
            <person name="Kravitz S."/>
            <person name="Kulp D."/>
            <person name="Lai Z."/>
            <person name="Lasko P."/>
            <person name="Lei Y."/>
            <person name="Levitsky A.A."/>
            <person name="Li J.H."/>
            <person name="Li Z."/>
            <person name="Liang Y."/>
            <person name="Lin X."/>
            <person name="Liu X."/>
            <person name="Mattei B."/>
            <person name="McIntosh T.C."/>
            <person name="McLeod M.P."/>
            <person name="McPherson D."/>
            <person name="Merkulov G."/>
            <person name="Milshina N.V."/>
            <person name="Mobarry C."/>
            <person name="Morris J."/>
            <person name="Moshrefi A."/>
            <person name="Mount S.M."/>
            <person name="Moy M."/>
            <person name="Murphy B."/>
            <person name="Murphy L."/>
            <person name="Muzny D.M."/>
            <person name="Nelson D.L."/>
            <person name="Nelson D.R."/>
            <person name="Nelson K.A."/>
            <person name="Nixon K."/>
            <person name="Nusskern D.R."/>
            <person name="Pacleb J.M."/>
            <person name="Palazzolo M."/>
            <person name="Pittman G.S."/>
            <person name="Pan S."/>
            <person name="Pollard J."/>
            <person name="Puri V."/>
            <person name="Reese M.G."/>
            <person name="Reinert K."/>
            <person name="Remington K."/>
            <person name="Saunders R.D.C."/>
            <person name="Scheeler F."/>
            <person name="Shen H."/>
            <person name="Shue B.C."/>
            <person name="Siden-Kiamos I."/>
            <person name="Simpson M."/>
            <person name="Skupski M.P."/>
            <person name="Smith T.J."/>
            <person name="Spier E."/>
            <person name="Spradling A.C."/>
            <person name="Stapleton M."/>
            <person name="Strong R."/>
            <person name="Sun E."/>
            <person name="Svirskas R."/>
            <person name="Tector C."/>
            <person name="Turner R."/>
            <person name="Venter E."/>
            <person name="Wang A.H."/>
            <person name="Wang X."/>
            <person name="Wang Z.-Y."/>
            <person name="Wassarman D.A."/>
            <person name="Weinstock G.M."/>
            <person name="Weissenbach J."/>
            <person name="Williams S.M."/>
            <person name="Woodage T."/>
            <person name="Worley K.C."/>
            <person name="Wu D."/>
            <person name="Yang S."/>
            <person name="Yao Q.A."/>
            <person name="Ye J."/>
            <person name="Yeh R.-F."/>
            <person name="Zaveri J.S."/>
            <person name="Zhan M."/>
            <person name="Zhang G."/>
            <person name="Zhao Q."/>
            <person name="Zheng L."/>
            <person name="Zheng X.H."/>
            <person name="Zhong F.N."/>
            <person name="Zhong W."/>
            <person name="Zhou X."/>
            <person name="Zhu S.C."/>
            <person name="Zhu X."/>
            <person name="Smith H.O."/>
            <person name="Gibbs R.A."/>
            <person name="Myers E.W."/>
            <person name="Rubin G.M."/>
            <person name="Venter J.C."/>
        </authorList>
    </citation>
    <scope>NUCLEOTIDE SEQUENCE [LARGE SCALE GENOMIC DNA]</scope>
    <source>
        <strain evidence="16">Berkeley</strain>
    </source>
</reference>
<reference evidence="16" key="3">
    <citation type="journal article" date="2002" name="Genome Biol.">
        <title>Annotation of the Drosophila melanogaster euchromatic genome: a systematic review.</title>
        <authorList>
            <person name="Misra S."/>
            <person name="Crosby M.A."/>
            <person name="Mungall C.J."/>
            <person name="Matthews B.B."/>
            <person name="Campbell K.S."/>
            <person name="Hradecky P."/>
            <person name="Huang Y."/>
            <person name="Kaminker J.S."/>
            <person name="Millburn G.H."/>
            <person name="Prochnik S.E."/>
            <person name="Smith C.D."/>
            <person name="Tupy J.L."/>
            <person name="Whitfield E.J."/>
            <person name="Bayraktaroglu L."/>
            <person name="Berman B.P."/>
            <person name="Bettencourt B.R."/>
            <person name="Celniker S.E."/>
            <person name="de Grey A.D.N.J."/>
            <person name="Drysdale R.A."/>
            <person name="Harris N.L."/>
            <person name="Richter J."/>
            <person name="Russo S."/>
            <person name="Schroeder A.J."/>
            <person name="Shu S.Q."/>
            <person name="Stapleton M."/>
            <person name="Yamada C."/>
            <person name="Ashburner M."/>
            <person name="Gelbart W.M."/>
            <person name="Rubin G.M."/>
            <person name="Lewis S.E."/>
        </authorList>
    </citation>
    <scope>GENOME REANNOTATION</scope>
    <source>
        <strain evidence="16">Berkeley</strain>
    </source>
</reference>
<reference evidence="13" key="4">
    <citation type="journal article" date="2002" name="Genome Biol.">
        <title>A Drosophila full-length cDNA resource.</title>
        <authorList>
            <person name="Stapleton M."/>
            <person name="Carlson J.W."/>
            <person name="Brokstein P."/>
            <person name="Yu C."/>
            <person name="Champe M."/>
            <person name="George R.A."/>
            <person name="Guarin H."/>
            <person name="Kronmiller B."/>
            <person name="Pacleb J.M."/>
            <person name="Park S."/>
            <person name="Wan K.H."/>
            <person name="Rubin G.M."/>
            <person name="Celniker S.E."/>
        </authorList>
    </citation>
    <scope>NUCLEOTIDE SEQUENCE [LARGE SCALE MRNA]</scope>
    <source>
        <strain evidence="13">Berkeley</strain>
        <tissue evidence="13">Embryo</tissue>
    </source>
</reference>
<reference evidence="13 14" key="5">
    <citation type="submission" date="2009-02" db="EMBL/GenBank/DDBJ databases">
        <authorList>
            <person name="Stapleton M."/>
            <person name="Booth B."/>
            <person name="Carlson J."/>
            <person name="Chavez C."/>
            <person name="Frise E."/>
            <person name="George R."/>
            <person name="Pacleb J."/>
            <person name="Park S."/>
            <person name="Wan K."/>
            <person name="Yu C."/>
            <person name="Celniker S."/>
            <person name="Sandler J."/>
            <person name="Wan K."/>
        </authorList>
    </citation>
    <scope>NUCLEOTIDE SEQUENCE [LARGE SCALE MRNA] (ISOFORM F)</scope>
    <source>
        <strain evidence="13 14">Berkeley</strain>
    </source>
</reference>
<reference evidence="12" key="6">
    <citation type="submission" date="2004-08" db="EMBL/GenBank/DDBJ databases">
        <authorList>
            <person name="Stapleton M."/>
            <person name="Carlson J."/>
            <person name="Chavez C."/>
            <person name="Frise E."/>
            <person name="George R."/>
            <person name="Pacleb J."/>
            <person name="Park S."/>
            <person name="Wan K."/>
            <person name="Yu C."/>
            <person name="Rubin G.M."/>
            <person name="Celniker S."/>
        </authorList>
    </citation>
    <scope>NNUCLEOTIDE SEQUENCE [LARGE SCALE MRNA] OF 117-642</scope>
    <source>
        <strain evidence="12">Berkeley</strain>
    </source>
</reference>
<reference key="7">
    <citation type="journal article" date="1956" name="Jpn. J. Genet.">
        <title>The Effects Of The Environmental Conditions On Curled Expressivity And The Interaction Between Two Mimic Genes, Curled And Curly, In Drosophila Melanogaster.</title>
        <authorList>
            <person name="Nozawa K."/>
        </authorList>
    </citation>
    <scope>INDUCTION</scope>
</reference>
<reference evidence="10" key="8">
    <citation type="journal article" date="2009" name="Genetics">
        <title>Curled encodes the Drosophila homolog of the vertebrate circadian deadenylase Nocturnin.</title>
        <authorList>
            <person name="Groenke S."/>
            <person name="Bickmeyer I."/>
            <person name="Wunderlich R."/>
            <person name="Jaeckle H."/>
            <person name="Kuehnlein R.P."/>
        </authorList>
    </citation>
    <scope>FUNCTION</scope>
    <scope>SUBCELLULAR LOCATION</scope>
    <scope>TISSUE SPECIFICITY</scope>
    <scope>DEVELOPMENTAL STAGE</scope>
    <scope>INDUCTION BY FOOD DEPRIVATION</scope>
    <scope>DISRUPTION PHENOTYPE</scope>
</reference>
<reference evidence="10" key="9">
    <citation type="journal article" date="2010" name="Nat. Neurosci.">
        <title>Dissecting differential gene expression within the circadian neuronal circuit of Drosophila.</title>
        <authorList>
            <person name="Nagoshi E."/>
            <person name="Sugino K."/>
            <person name="Kula E."/>
            <person name="Okazaki E."/>
            <person name="Tachibana T."/>
            <person name="Nelson S."/>
            <person name="Rosbash M."/>
        </authorList>
    </citation>
    <scope>FUNCTION</scope>
    <scope>TISSUE SPECIFICITY</scope>
    <scope>INDUCTION</scope>
</reference>
<reference evidence="10" key="10">
    <citation type="journal article" date="2010" name="RNA">
        <title>Subunits of the Drosophila CCR4-NOT complex and their roles in mRNA deadenylation.</title>
        <authorList>
            <person name="Temme C."/>
            <person name="Zhang L."/>
            <person name="Kremmer E."/>
            <person name="Ihling C."/>
            <person name="Chartier A."/>
            <person name="Sinz A."/>
            <person name="Simonelig M."/>
            <person name="Wahle E."/>
        </authorList>
    </citation>
    <scope>FUNCTION</scope>
    <scope>ASSOCIATION WITH THE CCR4-NOT COMPLEX</scope>
    <scope>MUTAGENESIS OF ASP-491 AND ASN-493</scope>
</reference>
<reference evidence="10" key="11">
    <citation type="journal article" date="2019" name="Nat. Commun.">
        <title>The metabolites NADP+ and NADPH are the targets of the circadian protein Nocturnin (Curled).</title>
        <authorList>
            <person name="Estrella M.A."/>
            <person name="Du J."/>
            <person name="Chen L."/>
            <person name="Rath S."/>
            <person name="Prangley E."/>
            <person name="Chitrakar A."/>
            <person name="Aoki T."/>
            <person name="Schedl P."/>
            <person name="Rabinowitz J."/>
            <person name="Korennykh A."/>
        </authorList>
    </citation>
    <scope>FUNCTION</scope>
    <scope>CATALYTIC ACTIVITY</scope>
    <scope>LACK OF ADENYLASE ACTIVITY</scope>
    <scope>MUTAGENESIS OF GLU-363</scope>
</reference>
<evidence type="ECO:0000250" key="1">
    <source>
        <dbReference type="UniProtKB" id="Q9UK39"/>
    </source>
</evidence>
<evidence type="ECO:0000256" key="2">
    <source>
        <dbReference type="SAM" id="MobiDB-lite"/>
    </source>
</evidence>
<evidence type="ECO:0000269" key="3">
    <source>
    </source>
</evidence>
<evidence type="ECO:0000269" key="4">
    <source>
    </source>
</evidence>
<evidence type="ECO:0000269" key="5">
    <source>
    </source>
</evidence>
<evidence type="ECO:0000269" key="6">
    <source>
    </source>
</evidence>
<evidence type="ECO:0000269" key="7">
    <source ref="7"/>
</evidence>
<evidence type="ECO:0000303" key="8">
    <source>
    </source>
</evidence>
<evidence type="ECO:0000303" key="9">
    <source>
    </source>
</evidence>
<evidence type="ECO:0000305" key="10"/>
<evidence type="ECO:0000312" key="11">
    <source>
        <dbReference type="EMBL" id="AAK85704.1"/>
    </source>
</evidence>
<evidence type="ECO:0000312" key="12">
    <source>
        <dbReference type="EMBL" id="AAT94521.1"/>
    </source>
</evidence>
<evidence type="ECO:0000312" key="13">
    <source>
        <dbReference type="EMBL" id="AAZ86746.1"/>
    </source>
</evidence>
<evidence type="ECO:0000312" key="14">
    <source>
        <dbReference type="EMBL" id="ACN38810.1"/>
    </source>
</evidence>
<evidence type="ECO:0000312" key="15">
    <source>
        <dbReference type="FlyBase" id="FBgn0261808"/>
    </source>
</evidence>
<evidence type="ECO:0000312" key="16">
    <source>
        <dbReference type="Proteomes" id="UP000000803"/>
    </source>
</evidence>
<name>NOCT_DROME</name>